<organism>
    <name type="scientific">Mycoplasma genitalium (strain ATCC 33530 / DSM 19775 / NCTC 10195 / G37)</name>
    <name type="common">Mycoplasmoides genitalium</name>
    <dbReference type="NCBI Taxonomy" id="243273"/>
    <lineage>
        <taxon>Bacteria</taxon>
        <taxon>Bacillati</taxon>
        <taxon>Mycoplasmatota</taxon>
        <taxon>Mycoplasmoidales</taxon>
        <taxon>Mycoplasmoidaceae</taxon>
        <taxon>Mycoplasmoides</taxon>
    </lineage>
</organism>
<sequence>MFSFFKQIFKSLKKFFFLLFGIIFVLFSIIFLETSIVQLSNNLVSTYTTLVSKTNSSDIVAPAILKEANPVYIASLTNDSGYFSKIKIDDKKINYLFPYQENDFGSDSGQSNGSGDNQNKTIPRKGDVNEKDKLFLARKRGILKAYGEANIAEKRIYKGLAVSFNNTDSFNGSDISDSITNRHIISDPQNLIYDASGNLLGYFADGLIKETISLRAGIARFPGDKGKSTGTQVKITQKQQTNNDPQKDSTVNSLYKTNNKDKVWFKSDETKADNTDISANYLFTGGNEAANWFPNLYANIPIDLEIDPGSQFWKDVNPFKEIVEEFQTQKESKDNQSFTLTFNLDISKLNKLDNEQLKWLETNAKTIANNSSFGDWDLENKLKQLKKFELKINKDWLKKKVESEKDTILNSLPGFSDSDKDTIFKTQNGMMVRNNNLSFQPSSNNLQLVQNQNSQASNGIADPNFSNVQTAYNKIHQSNNTPEKTLDAVYAAVLDQWRSIFQEDLVKKTVDLLEKYRDHFLKATAFNNIDYSKQNIAIANNVSSAESASFLVSNKDEQRYNDLSLIDGVDLKSWLFKPEQNESNPLDTIYGGQDANNGFLQKIDYEFKPSTSSGGMTASLKNTQALSPKSTKFPIYPKLANIIAQAQLPEATNIPTTALDALKQWTNLDANGFNNLKEEDKRKAANNYLALLSYFTPAFQDPNELIETNRQMLEIPITVKNGVNPLILPTDQQNLVVQTPEAHGAVVSQQWLFRHNKEILPQEGEYAWKTALQTPNNFPNWLNDLPDRYKFSINGLTFAILGIGESVETGYPVLSLQSPLPNTQDEALIFVNDQAYRSILFAVPAANQENYYAFKSTDLKQHTDQDPVQFIANRLEGYLDVPRSDLAFNVKDISKFNYLTTARNYFPDLVQSYLAIVSTVIAIFLIILALYLIILLIKSFIKKNQTEFSIIRAGGFSTTKFIVGMSVFAGIVAIVSSFLGVLFAFLLEGQVKGIINRYWFIALPENSFNWLSFFGSFFITFFVFEFISWIAFKQLFSKPVNVLIDQGNETKFSVLLHLLKHKSHTMSPLTKFRVSLIVSRFSRLFTYVGLSSVALLLIGIAGTIPQKFSAAQTSTSLNRNFNYKLNLQTPTEQSGWYAIQPYSHFGVTDNNNGIKTLYNESVQANSQNEHPYKPSNLKLKNRQDQPIKAADGTELELGNLLLPSYGGAQQLNTDENFFRHASLSKWIIDFPIRVGGSNINPWEIVEKSIPKQITQLLSASSDQFLISVLTDDFFNNLNANGFLIRNPRTNQIQLDASRVLTTIDVFNPGGVKFNDSFLSFMLKVYGDFELAKQDSKLNFGIVPVDPAIEETYTYVEGPFGFQEDNLDENSPYTLTGINPESSFVNLIDGSGNSLRNLISSDQEMNVIVNAGFQYANNINIGDYVYIKPKNTATRYSEKFLKAPLNNSTVAFKVVGVSTDAFGQELYINQHIANNLLKLSGNQGRGIIRDVIKKTNGQSQSSDEYEIDYVKPNGYVPFNGVFSKELKPSLLNKALVLNSIIGVWGNFTDFGNNFQNLVRNKLDKVITSILPTDPEIINKLAQEKQIINTTSMNYESLRKELVNKYKTEWNSVNLLSQNASSIFGNNIIAPVLNIDAAGTSAQIIRNNAEVLFNTVNQVDAFLLGTIIPFIFITCVVLGISMLEEMKRIFISLKAIGYRDVQNLISLLTFFIPAFVLALLISIGVLAGVLIGIQAVVFNVAQVFLTNVFEFLPYMVGIVLFGVTIFVIGSYFWIKLRSAELKEGF</sequence>
<gene>
    <name type="ordered locus">MG468</name>
</gene>
<feature type="chain" id="PRO_0000210631" description="Uncharacterized ABC transporter permease MG468">
    <location>
        <begin position="1"/>
        <end position="1783"/>
    </location>
</feature>
<feature type="transmembrane region" description="Helical" evidence="1">
    <location>
        <begin position="16"/>
        <end position="36"/>
    </location>
</feature>
<feature type="transmembrane region" description="Helical" evidence="1">
    <location>
        <begin position="917"/>
        <end position="937"/>
    </location>
</feature>
<feature type="transmembrane region" description="Helical" evidence="1">
    <location>
        <begin position="967"/>
        <end position="987"/>
    </location>
</feature>
<feature type="transmembrane region" description="Helical" evidence="1">
    <location>
        <begin position="1010"/>
        <end position="1030"/>
    </location>
</feature>
<feature type="transmembrane region" description="Helical" evidence="1">
    <location>
        <begin position="1084"/>
        <end position="1104"/>
    </location>
</feature>
<feature type="transmembrane region" description="Helical" evidence="1">
    <location>
        <begin position="1660"/>
        <end position="1680"/>
    </location>
</feature>
<feature type="transmembrane region" description="Helical" evidence="1">
    <location>
        <begin position="1709"/>
        <end position="1729"/>
    </location>
</feature>
<feature type="transmembrane region" description="Helical" evidence="1">
    <location>
        <begin position="1730"/>
        <end position="1750"/>
    </location>
</feature>
<feature type="transmembrane region" description="Helical" evidence="1">
    <location>
        <begin position="1752"/>
        <end position="1772"/>
    </location>
</feature>
<feature type="region of interest" description="Disordered" evidence="2">
    <location>
        <begin position="105"/>
        <end position="125"/>
    </location>
</feature>
<feature type="compositionally biased region" description="Low complexity" evidence="2">
    <location>
        <begin position="105"/>
        <end position="119"/>
    </location>
</feature>
<keyword id="KW-1003">Cell membrane</keyword>
<keyword id="KW-0472">Membrane</keyword>
<keyword id="KW-1185">Reference proteome</keyword>
<keyword id="KW-0812">Transmembrane</keyword>
<keyword id="KW-1133">Transmembrane helix</keyword>
<keyword id="KW-0813">Transport</keyword>
<name>Y468_MYCGE</name>
<evidence type="ECO:0000255" key="1"/>
<evidence type="ECO:0000256" key="2">
    <source>
        <dbReference type="SAM" id="MobiDB-lite"/>
    </source>
</evidence>
<evidence type="ECO:0000305" key="3"/>
<reference key="1">
    <citation type="journal article" date="1995" name="Science">
        <title>The minimal gene complement of Mycoplasma genitalium.</title>
        <authorList>
            <person name="Fraser C.M."/>
            <person name="Gocayne J.D."/>
            <person name="White O."/>
            <person name="Adams M.D."/>
            <person name="Clayton R.A."/>
            <person name="Fleischmann R.D."/>
            <person name="Bult C.J."/>
            <person name="Kerlavage A.R."/>
            <person name="Sutton G.G."/>
            <person name="Kelley J.M."/>
            <person name="Fritchman J.L."/>
            <person name="Weidman J.F."/>
            <person name="Small K.V."/>
            <person name="Sandusky M."/>
            <person name="Fuhrmann J.L."/>
            <person name="Nguyen D.T."/>
            <person name="Utterback T.R."/>
            <person name="Saudek D.M."/>
            <person name="Phillips C.A."/>
            <person name="Merrick J.M."/>
            <person name="Tomb J.-F."/>
            <person name="Dougherty B.A."/>
            <person name="Bott K.F."/>
            <person name="Hu P.-C."/>
            <person name="Lucier T.S."/>
            <person name="Peterson S.N."/>
            <person name="Smith H.O."/>
            <person name="Hutchison C.A. III"/>
            <person name="Venter J.C."/>
        </authorList>
    </citation>
    <scope>NUCLEOTIDE SEQUENCE [LARGE SCALE GENOMIC DNA]</scope>
    <source>
        <strain>ATCC 33530 / DSM 19775 / NCTC 10195 / G37</strain>
    </source>
</reference>
<reference key="2">
    <citation type="submission" date="1998-10" db="EMBL/GenBank/DDBJ databases">
        <authorList>
            <person name="Fraser C.M."/>
            <person name="Gocayne J.D."/>
            <person name="White O."/>
            <person name="Adams M.D."/>
            <person name="Clayton R.A."/>
            <person name="Fleischmann R.D."/>
            <person name="Bult C.J."/>
            <person name="Kerlavage A.R."/>
            <person name="Sutton G.G."/>
            <person name="Kelley J.M."/>
            <person name="Fritchman J.L."/>
            <person name="Weidman J.F."/>
            <person name="Small K.V."/>
            <person name="Sandusky M."/>
            <person name="Fuhrmann J.L."/>
            <person name="Nguyen D.T."/>
            <person name="Utterback T.R."/>
            <person name="Saudek D.M."/>
            <person name="Phillips C.A."/>
            <person name="Merrick J.M."/>
            <person name="Tomb J.-F."/>
            <person name="Dougherty B.A."/>
            <person name="Bott K.F."/>
            <person name="Hu P.-C."/>
            <person name="Lucier T.S."/>
            <person name="Peterson S.N."/>
            <person name="Smith H.O."/>
            <person name="Hutchison C.A. III"/>
            <person name="Venter J.C."/>
        </authorList>
    </citation>
    <scope>SEQUENCE REVISION</scope>
</reference>
<reference key="3">
    <citation type="journal article" date="1993" name="J. Bacteriol.">
        <title>A survey of the Mycoplasma genitalium genome by using random sequencing.</title>
        <authorList>
            <person name="Peterson S.N."/>
            <person name="Hu P.-C."/>
            <person name="Bott K.F."/>
            <person name="Hutchison C.A. III"/>
        </authorList>
    </citation>
    <scope>NUCLEOTIDE SEQUENCE [GENOMIC DNA] OF 879-985</scope>
    <source>
        <strain>ATCC 33530 / DSM 19775 / NCTC 10195 / G37</strain>
    </source>
</reference>
<dbReference type="EMBL" id="L43967">
    <property type="protein sequence ID" value="AAC72488.1"/>
    <property type="molecule type" value="Genomic_DNA"/>
</dbReference>
<dbReference type="EMBL" id="U01808">
    <property type="protein sequence ID" value="AAD12339.1"/>
    <property type="molecule type" value="Genomic_DNA"/>
</dbReference>
<dbReference type="RefSeq" id="WP_009885565.1">
    <property type="nucleotide sequence ID" value="NC_000908.2"/>
</dbReference>
<dbReference type="STRING" id="243273.MG_468"/>
<dbReference type="GeneID" id="88282649"/>
<dbReference type="KEGG" id="mge:MG_468"/>
<dbReference type="eggNOG" id="COG0577">
    <property type="taxonomic scope" value="Bacteria"/>
</dbReference>
<dbReference type="HOGENOM" id="CLU_237674_0_0_14"/>
<dbReference type="InParanoid" id="Q49460"/>
<dbReference type="OrthoDB" id="403889at2"/>
<dbReference type="BioCyc" id="MGEN243273:G1GJ2-562-MONOMER"/>
<dbReference type="Proteomes" id="UP000000807">
    <property type="component" value="Chromosome"/>
</dbReference>
<dbReference type="GO" id="GO:0005886">
    <property type="term" value="C:plasma membrane"/>
    <property type="evidence" value="ECO:0007669"/>
    <property type="project" value="UniProtKB-SubCell"/>
</dbReference>
<dbReference type="InterPro" id="IPR003838">
    <property type="entry name" value="ABC3_permease_C"/>
</dbReference>
<dbReference type="Pfam" id="PF02687">
    <property type="entry name" value="FtsX"/>
    <property type="match status" value="1"/>
</dbReference>
<comment type="subcellular location">
    <subcellularLocation>
        <location evidence="3">Cell membrane</location>
        <topology evidence="3">Multi-pass membrane protein</topology>
    </subcellularLocation>
</comment>
<comment type="similarity">
    <text evidence="3">Belongs to the ABC-4 integral membrane protein family.</text>
</comment>
<proteinExistence type="inferred from homology"/>
<protein>
    <recommendedName>
        <fullName>Uncharacterized ABC transporter permease MG468</fullName>
    </recommendedName>
</protein>
<accession>Q49460</accession>